<gene>
    <name evidence="1" type="primary">murC</name>
    <name type="ordered locus">PSPA7_4983</name>
</gene>
<reference key="1">
    <citation type="submission" date="2007-06" db="EMBL/GenBank/DDBJ databases">
        <authorList>
            <person name="Dodson R.J."/>
            <person name="Harkins D."/>
            <person name="Paulsen I.T."/>
        </authorList>
    </citation>
    <scope>NUCLEOTIDE SEQUENCE [LARGE SCALE GENOMIC DNA]</scope>
    <source>
        <strain>DSM 24068 / PA7</strain>
    </source>
</reference>
<proteinExistence type="inferred from homology"/>
<sequence length="480" mass="52010">MVKEPNGVTRTMRRIRRIHFVGIGGAGMCGIAEVLLNLGYEVSGSDLKASAVTERLEKFGAQIFIGHQAENADGADVLVVSSAINRANPEVASALERRIPVVPRAEMLAELMRYRHGIAVAGTHGKTTTTSLIASVFAAGGLDPTFVIGGRLNAAGTNAQLGASRYLVAEADESDASFLHLQPMVAVVTNIDADHMATYGGDFNKLKKTFVEFLHNLPFYGLAVMCVDDPVVREILPQIARPTVTYGLSEDADVRAINIRQEGMRTWFTVLRPEREPLDVSVNMPGLHNVLNSLATIVIATDEGISDEAIVQGLSGFQGVGRRFQVYGELQVEGGSVMLVDDYGHHPREVAAVIKAIRGGWPERRLVMVYQPHRYTRTRDLYEDFVQVLGEANVLLLMEVYPAGEEPIPGADSRQLCHSIRQRGQLDPIYFERDADLAPLVKPLLRAGDILLCQGAGDVGGLAPQLIRNPLFAGKGGKGA</sequence>
<dbReference type="EC" id="6.3.2.8" evidence="1"/>
<dbReference type="EMBL" id="CP000744">
    <property type="protein sequence ID" value="ABR86432.1"/>
    <property type="molecule type" value="Genomic_DNA"/>
</dbReference>
<dbReference type="RefSeq" id="WP_012077192.1">
    <property type="nucleotide sequence ID" value="NC_009656.1"/>
</dbReference>
<dbReference type="SMR" id="A6VB84"/>
<dbReference type="GeneID" id="77222911"/>
<dbReference type="KEGG" id="pap:PSPA7_4983"/>
<dbReference type="HOGENOM" id="CLU_028104_2_2_6"/>
<dbReference type="UniPathway" id="UPA00219"/>
<dbReference type="Proteomes" id="UP000001582">
    <property type="component" value="Chromosome"/>
</dbReference>
<dbReference type="GO" id="GO:0005737">
    <property type="term" value="C:cytoplasm"/>
    <property type="evidence" value="ECO:0007669"/>
    <property type="project" value="UniProtKB-SubCell"/>
</dbReference>
<dbReference type="GO" id="GO:0005524">
    <property type="term" value="F:ATP binding"/>
    <property type="evidence" value="ECO:0007669"/>
    <property type="project" value="UniProtKB-UniRule"/>
</dbReference>
<dbReference type="GO" id="GO:0008763">
    <property type="term" value="F:UDP-N-acetylmuramate-L-alanine ligase activity"/>
    <property type="evidence" value="ECO:0007669"/>
    <property type="project" value="UniProtKB-UniRule"/>
</dbReference>
<dbReference type="GO" id="GO:0051301">
    <property type="term" value="P:cell division"/>
    <property type="evidence" value="ECO:0007669"/>
    <property type="project" value="UniProtKB-KW"/>
</dbReference>
<dbReference type="GO" id="GO:0071555">
    <property type="term" value="P:cell wall organization"/>
    <property type="evidence" value="ECO:0007669"/>
    <property type="project" value="UniProtKB-KW"/>
</dbReference>
<dbReference type="GO" id="GO:0009252">
    <property type="term" value="P:peptidoglycan biosynthetic process"/>
    <property type="evidence" value="ECO:0007669"/>
    <property type="project" value="UniProtKB-UniRule"/>
</dbReference>
<dbReference type="GO" id="GO:0008360">
    <property type="term" value="P:regulation of cell shape"/>
    <property type="evidence" value="ECO:0007669"/>
    <property type="project" value="UniProtKB-KW"/>
</dbReference>
<dbReference type="FunFam" id="3.40.1190.10:FF:000001">
    <property type="entry name" value="UDP-N-acetylmuramate--L-alanine ligase"/>
    <property type="match status" value="1"/>
</dbReference>
<dbReference type="Gene3D" id="3.90.190.20">
    <property type="entry name" value="Mur ligase, C-terminal domain"/>
    <property type="match status" value="1"/>
</dbReference>
<dbReference type="Gene3D" id="3.40.1190.10">
    <property type="entry name" value="Mur-like, catalytic domain"/>
    <property type="match status" value="1"/>
</dbReference>
<dbReference type="Gene3D" id="3.40.50.720">
    <property type="entry name" value="NAD(P)-binding Rossmann-like Domain"/>
    <property type="match status" value="1"/>
</dbReference>
<dbReference type="HAMAP" id="MF_00046">
    <property type="entry name" value="MurC"/>
    <property type="match status" value="1"/>
</dbReference>
<dbReference type="InterPro" id="IPR036565">
    <property type="entry name" value="Mur-like_cat_sf"/>
</dbReference>
<dbReference type="InterPro" id="IPR004101">
    <property type="entry name" value="Mur_ligase_C"/>
</dbReference>
<dbReference type="InterPro" id="IPR036615">
    <property type="entry name" value="Mur_ligase_C_dom_sf"/>
</dbReference>
<dbReference type="InterPro" id="IPR013221">
    <property type="entry name" value="Mur_ligase_cen"/>
</dbReference>
<dbReference type="InterPro" id="IPR000713">
    <property type="entry name" value="Mur_ligase_N"/>
</dbReference>
<dbReference type="InterPro" id="IPR050061">
    <property type="entry name" value="MurCDEF_pg_biosynth"/>
</dbReference>
<dbReference type="InterPro" id="IPR005758">
    <property type="entry name" value="UDP-N-AcMur_Ala_ligase_MurC"/>
</dbReference>
<dbReference type="NCBIfam" id="TIGR01082">
    <property type="entry name" value="murC"/>
    <property type="match status" value="1"/>
</dbReference>
<dbReference type="PANTHER" id="PTHR43445:SF3">
    <property type="entry name" value="UDP-N-ACETYLMURAMATE--L-ALANINE LIGASE"/>
    <property type="match status" value="1"/>
</dbReference>
<dbReference type="PANTHER" id="PTHR43445">
    <property type="entry name" value="UDP-N-ACETYLMURAMATE--L-ALANINE LIGASE-RELATED"/>
    <property type="match status" value="1"/>
</dbReference>
<dbReference type="Pfam" id="PF01225">
    <property type="entry name" value="Mur_ligase"/>
    <property type="match status" value="1"/>
</dbReference>
<dbReference type="Pfam" id="PF02875">
    <property type="entry name" value="Mur_ligase_C"/>
    <property type="match status" value="1"/>
</dbReference>
<dbReference type="Pfam" id="PF08245">
    <property type="entry name" value="Mur_ligase_M"/>
    <property type="match status" value="1"/>
</dbReference>
<dbReference type="SUPFAM" id="SSF51984">
    <property type="entry name" value="MurCD N-terminal domain"/>
    <property type="match status" value="1"/>
</dbReference>
<dbReference type="SUPFAM" id="SSF53623">
    <property type="entry name" value="MurD-like peptide ligases, catalytic domain"/>
    <property type="match status" value="1"/>
</dbReference>
<dbReference type="SUPFAM" id="SSF53244">
    <property type="entry name" value="MurD-like peptide ligases, peptide-binding domain"/>
    <property type="match status" value="1"/>
</dbReference>
<protein>
    <recommendedName>
        <fullName evidence="1">UDP-N-acetylmuramate--L-alanine ligase</fullName>
        <ecNumber evidence="1">6.3.2.8</ecNumber>
    </recommendedName>
    <alternativeName>
        <fullName evidence="1">UDP-N-acetylmuramoyl-L-alanine synthetase</fullName>
    </alternativeName>
</protein>
<organism>
    <name type="scientific">Pseudomonas paraeruginosa (strain DSM 24068 / PA7)</name>
    <name type="common">Pseudomonas aeruginosa (strain PA7)</name>
    <dbReference type="NCBI Taxonomy" id="381754"/>
    <lineage>
        <taxon>Bacteria</taxon>
        <taxon>Pseudomonadati</taxon>
        <taxon>Pseudomonadota</taxon>
        <taxon>Gammaproteobacteria</taxon>
        <taxon>Pseudomonadales</taxon>
        <taxon>Pseudomonadaceae</taxon>
        <taxon>Pseudomonas</taxon>
        <taxon>Pseudomonas paraeruginosa</taxon>
    </lineage>
</organism>
<name>MURC_PSEP7</name>
<feature type="chain" id="PRO_0000336855" description="UDP-N-acetylmuramate--L-alanine ligase">
    <location>
        <begin position="1"/>
        <end position="480"/>
    </location>
</feature>
<feature type="binding site" evidence="1">
    <location>
        <begin position="122"/>
        <end position="128"/>
    </location>
    <ligand>
        <name>ATP</name>
        <dbReference type="ChEBI" id="CHEBI:30616"/>
    </ligand>
</feature>
<accession>A6VB84</accession>
<comment type="function">
    <text evidence="1">Cell wall formation.</text>
</comment>
<comment type="catalytic activity">
    <reaction evidence="1">
        <text>UDP-N-acetyl-alpha-D-muramate + L-alanine + ATP = UDP-N-acetyl-alpha-D-muramoyl-L-alanine + ADP + phosphate + H(+)</text>
        <dbReference type="Rhea" id="RHEA:23372"/>
        <dbReference type="ChEBI" id="CHEBI:15378"/>
        <dbReference type="ChEBI" id="CHEBI:30616"/>
        <dbReference type="ChEBI" id="CHEBI:43474"/>
        <dbReference type="ChEBI" id="CHEBI:57972"/>
        <dbReference type="ChEBI" id="CHEBI:70757"/>
        <dbReference type="ChEBI" id="CHEBI:83898"/>
        <dbReference type="ChEBI" id="CHEBI:456216"/>
        <dbReference type="EC" id="6.3.2.8"/>
    </reaction>
</comment>
<comment type="pathway">
    <text evidence="1">Cell wall biogenesis; peptidoglycan biosynthesis.</text>
</comment>
<comment type="subcellular location">
    <subcellularLocation>
        <location evidence="1">Cytoplasm</location>
    </subcellularLocation>
</comment>
<comment type="similarity">
    <text evidence="1">Belongs to the MurCDEF family.</text>
</comment>
<keyword id="KW-0067">ATP-binding</keyword>
<keyword id="KW-0131">Cell cycle</keyword>
<keyword id="KW-0132">Cell division</keyword>
<keyword id="KW-0133">Cell shape</keyword>
<keyword id="KW-0961">Cell wall biogenesis/degradation</keyword>
<keyword id="KW-0963">Cytoplasm</keyword>
<keyword id="KW-0436">Ligase</keyword>
<keyword id="KW-0547">Nucleotide-binding</keyword>
<keyword id="KW-0573">Peptidoglycan synthesis</keyword>
<evidence type="ECO:0000255" key="1">
    <source>
        <dbReference type="HAMAP-Rule" id="MF_00046"/>
    </source>
</evidence>